<dbReference type="EMBL" id="BX284604">
    <property type="protein sequence ID" value="CAB60305.1"/>
    <property type="molecule type" value="Genomic_DNA"/>
</dbReference>
<dbReference type="RefSeq" id="NP_502887.1">
    <property type="nucleotide sequence ID" value="NM_070486.4"/>
</dbReference>
<dbReference type="SMR" id="Q9U320"/>
<dbReference type="ComplexPortal" id="CPX-4628">
    <property type="entry name" value="daf-37-daf-38 complex"/>
</dbReference>
<dbReference type="FunCoup" id="Q9U320">
    <property type="interactions" value="1"/>
</dbReference>
<dbReference type="IntAct" id="Q9U320">
    <property type="interactions" value="1"/>
</dbReference>
<dbReference type="STRING" id="6239.Y105C5A.23.1"/>
<dbReference type="PaxDb" id="6239-Y105C5A.23"/>
<dbReference type="EnsemblMetazoa" id="Y105C5A.23.1">
    <property type="protein sequence ID" value="Y105C5A.23.1"/>
    <property type="gene ID" value="WBGene00013642"/>
</dbReference>
<dbReference type="GeneID" id="178443"/>
<dbReference type="KEGG" id="cel:CELE_Y105C5A.23"/>
<dbReference type="UCSC" id="Y105C5A.23">
    <property type="organism name" value="c. elegans"/>
</dbReference>
<dbReference type="AGR" id="WB:WBGene00013642"/>
<dbReference type="CTD" id="178443"/>
<dbReference type="WormBase" id="Y105C5A.23">
    <property type="protein sequence ID" value="CE24056"/>
    <property type="gene ID" value="WBGene00013642"/>
    <property type="gene designation" value="daf-38"/>
</dbReference>
<dbReference type="eggNOG" id="KOG3656">
    <property type="taxonomic scope" value="Eukaryota"/>
</dbReference>
<dbReference type="GeneTree" id="ENSGT01130000278263"/>
<dbReference type="HOGENOM" id="CLU_009579_15_7_1"/>
<dbReference type="InParanoid" id="Q9U320"/>
<dbReference type="OMA" id="GCETVDT"/>
<dbReference type="OrthoDB" id="6435638at2759"/>
<dbReference type="PhylomeDB" id="Q9U320"/>
<dbReference type="PRO" id="PR:Q9U320"/>
<dbReference type="Proteomes" id="UP000001940">
    <property type="component" value="Chromosome IV"/>
</dbReference>
<dbReference type="Bgee" id="WBGene00013642">
    <property type="expression patterns" value="Expressed in larva and 3 other cell types or tissues"/>
</dbReference>
<dbReference type="GO" id="GO:0038039">
    <property type="term" value="C:G protein-coupled receptor heterodimeric complex"/>
    <property type="evidence" value="ECO:0000353"/>
    <property type="project" value="ComplexPortal"/>
</dbReference>
<dbReference type="GO" id="GO:0005886">
    <property type="term" value="C:plasma membrane"/>
    <property type="evidence" value="ECO:0000318"/>
    <property type="project" value="GO_Central"/>
</dbReference>
<dbReference type="GO" id="GO:0008528">
    <property type="term" value="F:G protein-coupled peptide receptor activity"/>
    <property type="evidence" value="ECO:0000318"/>
    <property type="project" value="GO_Central"/>
</dbReference>
<dbReference type="GO" id="GO:0046982">
    <property type="term" value="F:protein heterodimerization activity"/>
    <property type="evidence" value="ECO:0000353"/>
    <property type="project" value="WormBase"/>
</dbReference>
<dbReference type="GO" id="GO:0007186">
    <property type="term" value="P:G protein-coupled receptor signaling pathway"/>
    <property type="evidence" value="ECO:0000315"/>
    <property type="project" value="WormBase"/>
</dbReference>
<dbReference type="GO" id="GO:1904066">
    <property type="term" value="P:G protein-coupled receptor signaling pathway involved in dauer larval development"/>
    <property type="evidence" value="ECO:0000303"/>
    <property type="project" value="ComplexPortal"/>
</dbReference>
<dbReference type="GO" id="GO:0007218">
    <property type="term" value="P:neuropeptide signaling pathway"/>
    <property type="evidence" value="ECO:0000318"/>
    <property type="project" value="GO_Central"/>
</dbReference>
<dbReference type="GO" id="GO:0043949">
    <property type="term" value="P:regulation of cAMP-mediated signaling"/>
    <property type="evidence" value="ECO:0000303"/>
    <property type="project" value="ComplexPortal"/>
</dbReference>
<dbReference type="GO" id="GO:1905909">
    <property type="term" value="P:regulation of dauer entry"/>
    <property type="evidence" value="ECO:0000303"/>
    <property type="project" value="ComplexPortal"/>
</dbReference>
<dbReference type="Gene3D" id="1.20.1070.10">
    <property type="entry name" value="Rhodopsin 7-helix transmembrane proteins"/>
    <property type="match status" value="1"/>
</dbReference>
<dbReference type="InterPro" id="IPR000276">
    <property type="entry name" value="GPCR_Rhodpsn"/>
</dbReference>
<dbReference type="InterPro" id="IPR017452">
    <property type="entry name" value="GPCR_Rhodpsn_7TM"/>
</dbReference>
<dbReference type="PANTHER" id="PTHR24230">
    <property type="entry name" value="G-PROTEIN COUPLED RECEPTOR"/>
    <property type="match status" value="1"/>
</dbReference>
<dbReference type="PANTHER" id="PTHR24230:SF120">
    <property type="entry name" value="G-PROTEIN COUPLED RECEPTOR DAF-38"/>
    <property type="match status" value="1"/>
</dbReference>
<dbReference type="Pfam" id="PF00001">
    <property type="entry name" value="7tm_1"/>
    <property type="match status" value="1"/>
</dbReference>
<dbReference type="PRINTS" id="PR00237">
    <property type="entry name" value="GPCRRHODOPSN"/>
</dbReference>
<dbReference type="SUPFAM" id="SSF81321">
    <property type="entry name" value="Family A G protein-coupled receptor-like"/>
    <property type="match status" value="1"/>
</dbReference>
<dbReference type="PROSITE" id="PS50262">
    <property type="entry name" value="G_PROTEIN_RECEP_F1_2"/>
    <property type="match status" value="1"/>
</dbReference>
<evidence type="ECO:0000255" key="1"/>
<evidence type="ECO:0000255" key="2">
    <source>
        <dbReference type="PROSITE-ProRule" id="PRU00521"/>
    </source>
</evidence>
<evidence type="ECO:0000256" key="3">
    <source>
        <dbReference type="SAM" id="MobiDB-lite"/>
    </source>
</evidence>
<evidence type="ECO:0000269" key="4">
    <source>
    </source>
</evidence>
<evidence type="ECO:0000305" key="5"/>
<evidence type="ECO:0000312" key="6">
    <source>
        <dbReference type="Proteomes" id="UP000001940"/>
    </source>
</evidence>
<evidence type="ECO:0000312" key="7">
    <source>
        <dbReference type="WormBase" id="Y105C5A.23"/>
    </source>
</evidence>
<feature type="chain" id="PRO_0000436099" description="G-protein coupled receptor daf-38" evidence="5">
    <location>
        <begin position="1"/>
        <end position="415"/>
    </location>
</feature>
<feature type="topological domain" description="Extracellular" evidence="5">
    <location>
        <begin position="1"/>
        <end position="35"/>
    </location>
</feature>
<feature type="transmembrane region" description="Helical" evidence="1">
    <location>
        <begin position="36"/>
        <end position="56"/>
    </location>
</feature>
<feature type="topological domain" description="Cytoplasmic" evidence="5">
    <location>
        <begin position="57"/>
        <end position="75"/>
    </location>
</feature>
<feature type="transmembrane region" description="Helical" evidence="1">
    <location>
        <begin position="76"/>
        <end position="96"/>
    </location>
</feature>
<feature type="topological domain" description="Extracellular" evidence="5">
    <location>
        <begin position="97"/>
        <end position="108"/>
    </location>
</feature>
<feature type="transmembrane region" description="Helical" evidence="1">
    <location>
        <begin position="109"/>
        <end position="129"/>
    </location>
</feature>
<feature type="topological domain" description="Cytoplasmic" evidence="5">
    <location>
        <begin position="130"/>
        <end position="152"/>
    </location>
</feature>
<feature type="transmembrane region" description="Helical" evidence="1">
    <location>
        <begin position="153"/>
        <end position="173"/>
    </location>
</feature>
<feature type="topological domain" description="Extracellular" evidence="5">
    <location>
        <begin position="174"/>
        <end position="222"/>
    </location>
</feature>
<feature type="transmembrane region" description="Helical" evidence="1">
    <location>
        <begin position="223"/>
        <end position="243"/>
    </location>
</feature>
<feature type="topological domain" description="Cytoplasmic" evidence="5">
    <location>
        <begin position="244"/>
        <end position="345"/>
    </location>
</feature>
<feature type="transmembrane region" description="Helical" evidence="1">
    <location>
        <begin position="346"/>
        <end position="366"/>
    </location>
</feature>
<feature type="topological domain" description="Extracellular" evidence="5">
    <location>
        <begin position="367"/>
        <end position="382"/>
    </location>
</feature>
<feature type="transmembrane region" description="Helical" evidence="1">
    <location>
        <begin position="383"/>
        <end position="403"/>
    </location>
</feature>
<feature type="topological domain" description="Cytoplasmic" evidence="5">
    <location>
        <begin position="404"/>
        <end position="415"/>
    </location>
</feature>
<feature type="region of interest" description="Disordered" evidence="3">
    <location>
        <begin position="1"/>
        <end position="25"/>
    </location>
</feature>
<feature type="compositionally biased region" description="Low complexity" evidence="3">
    <location>
        <begin position="1"/>
        <end position="19"/>
    </location>
</feature>
<feature type="disulfide bond" evidence="2">
    <location>
        <begin position="107"/>
        <end position="187"/>
    </location>
</feature>
<name>DAF38_CAEEL</name>
<sequence length="415" mass="47440">MLLPSNLTTSTLMTSSSESYDADNPGLPPEPILSDYVEMFTLVLNFIVGAPLNLAAYTQLSERPTSTRLDLLKRSLNYSDLLVLFIYVPSRACWLLTYDWRGGDALCKIVKMFHTFAFQSSSNVIVCIAVDRLLSVLSPSHHSPNKALKRTKMMLIVAWIVALVISCPQLFIWKAYLALPEYNWSQCLQIWEIARMEKFNKPQVVPEFDAEFWYSILHISLVFWIPCIIIMLSYIIVISWVWINSRPSIRHTSSFSFHTGCDTVDTVLTRASEWNPLKTFSRHVNIKEPEKPMTTPRIVVSDETEVPLTQRPSISPSEASAVMRTGVHTSTSYNANLNRSRALRVSLLLVVAYIICWLPYNLISLIQFLDRDFFSSYLKHVHFCQQLIIFNSVVNPWLYGFFGPRRPSTTGAGRH</sequence>
<proteinExistence type="evidence at protein level"/>
<gene>
    <name evidence="7" type="primary">daf-38</name>
    <name evidence="7" type="ORF">Y105C5A.23</name>
</gene>
<comment type="function">
    <text evidence="4">G-protein coupled receptor (GPCR) that forms a heterodimer with daf-37 to control dauer formation and behavior. Required for the response to dauer inducing pheromones such as the ascarosides ascr#2, ascr#3 and ascr#5.</text>
</comment>
<comment type="subunit">
    <text evidence="4">Heterodimer; with daf-37.</text>
</comment>
<comment type="subcellular location">
    <subcellularLocation>
        <location evidence="5">Cell membrane</location>
        <topology evidence="1">Multi-pass membrane protein</topology>
    </subcellularLocation>
</comment>
<comment type="tissue specificity">
    <text evidence="4">Expressed in the ASI and ASK chemosensory neurons and in the IL-2 interneurons, but weakly expressed in other head neurons in hermaphrodites.</text>
</comment>
<comment type="similarity">
    <text evidence="2">Belongs to the G-protein coupled receptor 1 family.</text>
</comment>
<organism evidence="6">
    <name type="scientific">Caenorhabditis elegans</name>
    <dbReference type="NCBI Taxonomy" id="6239"/>
    <lineage>
        <taxon>Eukaryota</taxon>
        <taxon>Metazoa</taxon>
        <taxon>Ecdysozoa</taxon>
        <taxon>Nematoda</taxon>
        <taxon>Chromadorea</taxon>
        <taxon>Rhabditida</taxon>
        <taxon>Rhabditina</taxon>
        <taxon>Rhabditomorpha</taxon>
        <taxon>Rhabditoidea</taxon>
        <taxon>Rhabditidae</taxon>
        <taxon>Peloderinae</taxon>
        <taxon>Caenorhabditis</taxon>
    </lineage>
</organism>
<reference evidence="6" key="1">
    <citation type="journal article" date="1998" name="Science">
        <title>Genome sequence of the nematode C. elegans: a platform for investigating biology.</title>
        <authorList>
            <consortium name="The C. elegans sequencing consortium"/>
        </authorList>
    </citation>
    <scope>NUCLEOTIDE SEQUENCE [LARGE SCALE GENOMIC DNA]</scope>
    <source>
        <strain evidence="6">Bristol N2</strain>
    </source>
</reference>
<reference evidence="5" key="2">
    <citation type="journal article" date="2012" name="Proc. Natl. Acad. Sci. U.S.A.">
        <title>Interaction of structure-specific and promiscuous G-protein-coupled receptors mediates small-molecule signaling in Caenorhabditis elegans.</title>
        <authorList>
            <person name="Park D."/>
            <person name="O'Doherty I."/>
            <person name="Somvanshi R.K."/>
            <person name="Bethke A."/>
            <person name="Schroeder F.C."/>
            <person name="Kumar U."/>
            <person name="Riddle D.L."/>
        </authorList>
    </citation>
    <scope>FUNCTION</scope>
    <scope>SUBUNIT</scope>
    <scope>TISSUE SPECIFICITY</scope>
</reference>
<accession>Q9U320</accession>
<keyword id="KW-1003">Cell membrane</keyword>
<keyword id="KW-1015">Disulfide bond</keyword>
<keyword id="KW-0297">G-protein coupled receptor</keyword>
<keyword id="KW-0472">Membrane</keyword>
<keyword id="KW-0675">Receptor</keyword>
<keyword id="KW-1185">Reference proteome</keyword>
<keyword id="KW-0807">Transducer</keyword>
<keyword id="KW-0812">Transmembrane</keyword>
<keyword id="KW-1133">Transmembrane helix</keyword>
<protein>
    <recommendedName>
        <fullName evidence="5">G-protein coupled receptor daf-38</fullName>
    </recommendedName>
    <alternativeName>
        <fullName evidence="7">Abnormal dauer formation protein 38</fullName>
    </alternativeName>
</protein>